<protein>
    <recommendedName>
        <fullName evidence="1">Peptide chain release factor 1</fullName>
        <shortName evidence="1">RF-1</shortName>
    </recommendedName>
</protein>
<name>RF1_BRUA1</name>
<evidence type="ECO:0000255" key="1">
    <source>
        <dbReference type="HAMAP-Rule" id="MF_00093"/>
    </source>
</evidence>
<evidence type="ECO:0000256" key="2">
    <source>
        <dbReference type="SAM" id="MobiDB-lite"/>
    </source>
</evidence>
<comment type="function">
    <text evidence="1">Peptide chain release factor 1 directs the termination of translation in response to the peptide chain termination codons UAG and UAA.</text>
</comment>
<comment type="subcellular location">
    <subcellularLocation>
        <location evidence="1">Cytoplasm</location>
    </subcellularLocation>
</comment>
<comment type="PTM">
    <text evidence="1">Methylated by PrmC. Methylation increases the termination efficiency of RF1.</text>
</comment>
<comment type="similarity">
    <text evidence="1">Belongs to the prokaryotic/mitochondrial release factor family.</text>
</comment>
<sequence>MIALPQDRMDQLLKRFSMIESQMANNPDSDTYVKLASEYSELQDVVGKIRELSDARMEASDLAAMRDDASTDAEMRALAVEELPEVEKRIAVLEQDVQILLLPKDAADDKNAILEIRAGTGGLEATLFAGDLFRMYERYAAEKGWRVELVSASEGDAGGYKEIIATVSGKGVFSKLKFESGVHRVQRVPETEAGGRIHTSAATVAVLPEAEDIDIEIRNEDIRIDTMRASGAGGQHVNTTDSAVRITHIPTGIMVVQAEKSQHQNRARAMQILRARLYDMERQKAESERSQARRSQVGSGDRSERIRTYNFPQGRVTDHRINLTLYKLDRVMEGDLDELVDALISDHQTALLAELGEQP</sequence>
<proteinExistence type="inferred from homology"/>
<organism>
    <name type="scientific">Brucella abortus (strain S19)</name>
    <dbReference type="NCBI Taxonomy" id="430066"/>
    <lineage>
        <taxon>Bacteria</taxon>
        <taxon>Pseudomonadati</taxon>
        <taxon>Pseudomonadota</taxon>
        <taxon>Alphaproteobacteria</taxon>
        <taxon>Hyphomicrobiales</taxon>
        <taxon>Brucellaceae</taxon>
        <taxon>Brucella/Ochrobactrum group</taxon>
        <taxon>Brucella</taxon>
    </lineage>
</organism>
<reference key="1">
    <citation type="journal article" date="2008" name="PLoS ONE">
        <title>Genome sequence of Brucella abortus vaccine strain S19 compared to virulent strains yields candidate virulence genes.</title>
        <authorList>
            <person name="Crasta O.R."/>
            <person name="Folkerts O."/>
            <person name="Fei Z."/>
            <person name="Mane S.P."/>
            <person name="Evans C."/>
            <person name="Martino-Catt S."/>
            <person name="Bricker B."/>
            <person name="Yu G."/>
            <person name="Du L."/>
            <person name="Sobral B.W."/>
        </authorList>
    </citation>
    <scope>NUCLEOTIDE SEQUENCE [LARGE SCALE GENOMIC DNA]</scope>
    <source>
        <strain>S19</strain>
    </source>
</reference>
<feature type="chain" id="PRO_1000093428" description="Peptide chain release factor 1">
    <location>
        <begin position="1"/>
        <end position="359"/>
    </location>
</feature>
<feature type="region of interest" description="Disordered" evidence="2">
    <location>
        <begin position="283"/>
        <end position="309"/>
    </location>
</feature>
<feature type="modified residue" description="N5-methylglutamine" evidence="1">
    <location>
        <position position="235"/>
    </location>
</feature>
<keyword id="KW-0963">Cytoplasm</keyword>
<keyword id="KW-0488">Methylation</keyword>
<keyword id="KW-0648">Protein biosynthesis</keyword>
<dbReference type="EMBL" id="CP000887">
    <property type="protein sequence ID" value="ACD73234.1"/>
    <property type="molecule type" value="Genomic_DNA"/>
</dbReference>
<dbReference type="RefSeq" id="WP_002967956.1">
    <property type="nucleotide sequence ID" value="NC_010742.1"/>
</dbReference>
<dbReference type="SMR" id="B2S825"/>
<dbReference type="GeneID" id="93017794"/>
<dbReference type="KEGG" id="bmc:BAbS19_I17520"/>
<dbReference type="HOGENOM" id="CLU_036856_0_1_5"/>
<dbReference type="Proteomes" id="UP000002565">
    <property type="component" value="Chromosome 1"/>
</dbReference>
<dbReference type="GO" id="GO:0005737">
    <property type="term" value="C:cytoplasm"/>
    <property type="evidence" value="ECO:0007669"/>
    <property type="project" value="UniProtKB-SubCell"/>
</dbReference>
<dbReference type="GO" id="GO:0016149">
    <property type="term" value="F:translation release factor activity, codon specific"/>
    <property type="evidence" value="ECO:0007669"/>
    <property type="project" value="UniProtKB-UniRule"/>
</dbReference>
<dbReference type="FunFam" id="3.30.160.20:FF:000004">
    <property type="entry name" value="Peptide chain release factor 1"/>
    <property type="match status" value="1"/>
</dbReference>
<dbReference type="FunFam" id="3.30.70.1660:FF:000002">
    <property type="entry name" value="Peptide chain release factor 1"/>
    <property type="match status" value="1"/>
</dbReference>
<dbReference type="FunFam" id="3.30.70.1660:FF:000004">
    <property type="entry name" value="Peptide chain release factor 1"/>
    <property type="match status" value="1"/>
</dbReference>
<dbReference type="Gene3D" id="3.30.160.20">
    <property type="match status" value="1"/>
</dbReference>
<dbReference type="Gene3D" id="3.30.70.1660">
    <property type="match status" value="2"/>
</dbReference>
<dbReference type="Gene3D" id="6.10.140.1950">
    <property type="match status" value="1"/>
</dbReference>
<dbReference type="HAMAP" id="MF_00093">
    <property type="entry name" value="Rel_fac_1"/>
    <property type="match status" value="1"/>
</dbReference>
<dbReference type="InterPro" id="IPR005139">
    <property type="entry name" value="PCRF"/>
</dbReference>
<dbReference type="InterPro" id="IPR000352">
    <property type="entry name" value="Pep_chain_release_fac_I"/>
</dbReference>
<dbReference type="InterPro" id="IPR045853">
    <property type="entry name" value="Pep_chain_release_fac_I_sf"/>
</dbReference>
<dbReference type="InterPro" id="IPR050057">
    <property type="entry name" value="Prokaryotic/Mito_RF"/>
</dbReference>
<dbReference type="InterPro" id="IPR004373">
    <property type="entry name" value="RF-1"/>
</dbReference>
<dbReference type="NCBIfam" id="TIGR00019">
    <property type="entry name" value="prfA"/>
    <property type="match status" value="1"/>
</dbReference>
<dbReference type="NCBIfam" id="NF001859">
    <property type="entry name" value="PRK00591.1"/>
    <property type="match status" value="1"/>
</dbReference>
<dbReference type="PANTHER" id="PTHR43804">
    <property type="entry name" value="LD18447P"/>
    <property type="match status" value="1"/>
</dbReference>
<dbReference type="PANTHER" id="PTHR43804:SF7">
    <property type="entry name" value="LD18447P"/>
    <property type="match status" value="1"/>
</dbReference>
<dbReference type="Pfam" id="PF03462">
    <property type="entry name" value="PCRF"/>
    <property type="match status" value="1"/>
</dbReference>
<dbReference type="Pfam" id="PF00472">
    <property type="entry name" value="RF-1"/>
    <property type="match status" value="1"/>
</dbReference>
<dbReference type="SMART" id="SM00937">
    <property type="entry name" value="PCRF"/>
    <property type="match status" value="1"/>
</dbReference>
<dbReference type="SUPFAM" id="SSF75620">
    <property type="entry name" value="Release factor"/>
    <property type="match status" value="1"/>
</dbReference>
<dbReference type="PROSITE" id="PS00745">
    <property type="entry name" value="RF_PROK_I"/>
    <property type="match status" value="1"/>
</dbReference>
<gene>
    <name evidence="1" type="primary">prfA</name>
    <name type="ordered locus">BAbS19_I17520</name>
</gene>
<accession>B2S825</accession>